<evidence type="ECO:0000255" key="1">
    <source>
        <dbReference type="HAMAP-Rule" id="MF_01821"/>
    </source>
</evidence>
<dbReference type="EC" id="3.6.4.-" evidence="1"/>
<dbReference type="EMBL" id="FM209186">
    <property type="protein sequence ID" value="CAW26486.1"/>
    <property type="molecule type" value="Genomic_DNA"/>
</dbReference>
<dbReference type="SMR" id="B7V6T4"/>
<dbReference type="KEGG" id="pag:PLES_17581"/>
<dbReference type="HOGENOM" id="CLU_011520_0_0_6"/>
<dbReference type="GO" id="GO:0005524">
    <property type="term" value="F:ATP binding"/>
    <property type="evidence" value="ECO:0007669"/>
    <property type="project" value="UniProtKB-UniRule"/>
</dbReference>
<dbReference type="GO" id="GO:0003677">
    <property type="term" value="F:DNA binding"/>
    <property type="evidence" value="ECO:0007669"/>
    <property type="project" value="UniProtKB-KW"/>
</dbReference>
<dbReference type="GO" id="GO:0004386">
    <property type="term" value="F:helicase activity"/>
    <property type="evidence" value="ECO:0007669"/>
    <property type="project" value="UniProtKB-UniRule"/>
</dbReference>
<dbReference type="GO" id="GO:0016817">
    <property type="term" value="F:hydrolase activity, acting on acid anhydrides"/>
    <property type="evidence" value="ECO:0007669"/>
    <property type="project" value="InterPro"/>
</dbReference>
<dbReference type="GO" id="GO:0006355">
    <property type="term" value="P:regulation of DNA-templated transcription"/>
    <property type="evidence" value="ECO:0007669"/>
    <property type="project" value="UniProtKB-UniRule"/>
</dbReference>
<dbReference type="CDD" id="cd18011">
    <property type="entry name" value="DEXDc_RapA"/>
    <property type="match status" value="1"/>
</dbReference>
<dbReference type="CDD" id="cd18793">
    <property type="entry name" value="SF2_C_SNF"/>
    <property type="match status" value="1"/>
</dbReference>
<dbReference type="Gene3D" id="2.30.30.140">
    <property type="match status" value="1"/>
</dbReference>
<dbReference type="Gene3D" id="2.30.30.930">
    <property type="match status" value="1"/>
</dbReference>
<dbReference type="Gene3D" id="3.30.360.80">
    <property type="match status" value="1"/>
</dbReference>
<dbReference type="Gene3D" id="6.10.140.1500">
    <property type="match status" value="1"/>
</dbReference>
<dbReference type="Gene3D" id="6.10.140.2230">
    <property type="match status" value="1"/>
</dbReference>
<dbReference type="Gene3D" id="3.40.50.300">
    <property type="entry name" value="P-loop containing nucleotide triphosphate hydrolases"/>
    <property type="match status" value="1"/>
</dbReference>
<dbReference type="Gene3D" id="3.40.50.10810">
    <property type="entry name" value="Tandem AAA-ATPase domain"/>
    <property type="match status" value="1"/>
</dbReference>
<dbReference type="HAMAP" id="MF_01821">
    <property type="entry name" value="Helicase_RapA"/>
    <property type="match status" value="1"/>
</dbReference>
<dbReference type="InterPro" id="IPR014001">
    <property type="entry name" value="Helicase_ATP-bd"/>
</dbReference>
<dbReference type="InterPro" id="IPR001650">
    <property type="entry name" value="Helicase_C-like"/>
</dbReference>
<dbReference type="InterPro" id="IPR023949">
    <property type="entry name" value="Helicase_RapA"/>
</dbReference>
<dbReference type="InterPro" id="IPR027417">
    <property type="entry name" value="P-loop_NTPase"/>
</dbReference>
<dbReference type="InterPro" id="IPR022737">
    <property type="entry name" value="RapA_C"/>
</dbReference>
<dbReference type="InterPro" id="IPR038718">
    <property type="entry name" value="SNF2-like_sf"/>
</dbReference>
<dbReference type="InterPro" id="IPR049730">
    <property type="entry name" value="SNF2/RAD54-like_C"/>
</dbReference>
<dbReference type="InterPro" id="IPR000330">
    <property type="entry name" value="SNF2_N"/>
</dbReference>
<dbReference type="InterPro" id="IPR040765">
    <property type="entry name" value="Tudor_1_RapA"/>
</dbReference>
<dbReference type="InterPro" id="IPR040766">
    <property type="entry name" value="Tudor_2_RapA"/>
</dbReference>
<dbReference type="NCBIfam" id="NF003426">
    <property type="entry name" value="PRK04914.1"/>
    <property type="match status" value="1"/>
</dbReference>
<dbReference type="PANTHER" id="PTHR45766">
    <property type="entry name" value="DNA ANNEALING HELICASE AND ENDONUCLEASE ZRANB3 FAMILY MEMBER"/>
    <property type="match status" value="1"/>
</dbReference>
<dbReference type="PANTHER" id="PTHR45766:SF6">
    <property type="entry name" value="SWI_SNF-RELATED MATRIX-ASSOCIATED ACTIN-DEPENDENT REGULATOR OF CHROMATIN SUBFAMILY A-LIKE PROTEIN 1"/>
    <property type="match status" value="1"/>
</dbReference>
<dbReference type="Pfam" id="PF00271">
    <property type="entry name" value="Helicase_C"/>
    <property type="match status" value="1"/>
</dbReference>
<dbReference type="Pfam" id="PF12137">
    <property type="entry name" value="RapA_C"/>
    <property type="match status" value="1"/>
</dbReference>
<dbReference type="Pfam" id="PF00176">
    <property type="entry name" value="SNF2-rel_dom"/>
    <property type="match status" value="1"/>
</dbReference>
<dbReference type="Pfam" id="PF18339">
    <property type="entry name" value="Tudor_1_RapA"/>
    <property type="match status" value="1"/>
</dbReference>
<dbReference type="Pfam" id="PF18337">
    <property type="entry name" value="Tudor_RapA"/>
    <property type="match status" value="1"/>
</dbReference>
<dbReference type="SMART" id="SM00487">
    <property type="entry name" value="DEXDc"/>
    <property type="match status" value="1"/>
</dbReference>
<dbReference type="SMART" id="SM00490">
    <property type="entry name" value="HELICc"/>
    <property type="match status" value="1"/>
</dbReference>
<dbReference type="SUPFAM" id="SSF52540">
    <property type="entry name" value="P-loop containing nucleoside triphosphate hydrolases"/>
    <property type="match status" value="2"/>
</dbReference>
<dbReference type="PROSITE" id="PS51192">
    <property type="entry name" value="HELICASE_ATP_BIND_1"/>
    <property type="match status" value="1"/>
</dbReference>
<dbReference type="PROSITE" id="PS51194">
    <property type="entry name" value="HELICASE_CTER"/>
    <property type="match status" value="1"/>
</dbReference>
<protein>
    <recommendedName>
        <fullName evidence="1">RNA polymerase-associated protein RapA</fullName>
        <ecNumber evidence="1">3.6.4.-</ecNumber>
    </recommendedName>
    <alternativeName>
        <fullName evidence="1">ATP-dependent helicase HepA</fullName>
    </alternativeName>
</protein>
<feature type="chain" id="PRO_1000188181" description="RNA polymerase-associated protein RapA">
    <location>
        <begin position="1"/>
        <end position="950"/>
    </location>
</feature>
<feature type="domain" description="Helicase ATP-binding" evidence="1">
    <location>
        <begin position="165"/>
        <end position="333"/>
    </location>
</feature>
<feature type="domain" description="Helicase C-terminal" evidence="1">
    <location>
        <begin position="475"/>
        <end position="629"/>
    </location>
</feature>
<feature type="short sequence motif" description="DEAH box">
    <location>
        <begin position="279"/>
        <end position="282"/>
    </location>
</feature>
<feature type="binding site" evidence="1">
    <location>
        <begin position="178"/>
        <end position="185"/>
    </location>
    <ligand>
        <name>ATP</name>
        <dbReference type="ChEBI" id="CHEBI:30616"/>
    </ligand>
</feature>
<reference key="1">
    <citation type="journal article" date="2009" name="Genome Res.">
        <title>Newly introduced genomic prophage islands are critical determinants of in vivo competitiveness in the Liverpool epidemic strain of Pseudomonas aeruginosa.</title>
        <authorList>
            <person name="Winstanley C."/>
            <person name="Langille M.G.I."/>
            <person name="Fothergill J.L."/>
            <person name="Kukavica-Ibrulj I."/>
            <person name="Paradis-Bleau C."/>
            <person name="Sanschagrin F."/>
            <person name="Thomson N.R."/>
            <person name="Winsor G.L."/>
            <person name="Quail M.A."/>
            <person name="Lennard N."/>
            <person name="Bignell A."/>
            <person name="Clarke L."/>
            <person name="Seeger K."/>
            <person name="Saunders D."/>
            <person name="Harris D."/>
            <person name="Parkhill J."/>
            <person name="Hancock R.E.W."/>
            <person name="Brinkman F.S.L."/>
            <person name="Levesque R.C."/>
        </authorList>
    </citation>
    <scope>NUCLEOTIDE SEQUENCE [LARGE SCALE GENOMIC DNA]</scope>
    <source>
        <strain>LESB58</strain>
    </source>
</reference>
<accession>B7V6T4</accession>
<organism>
    <name type="scientific">Pseudomonas aeruginosa (strain LESB58)</name>
    <dbReference type="NCBI Taxonomy" id="557722"/>
    <lineage>
        <taxon>Bacteria</taxon>
        <taxon>Pseudomonadati</taxon>
        <taxon>Pseudomonadota</taxon>
        <taxon>Gammaproteobacteria</taxon>
        <taxon>Pseudomonadales</taxon>
        <taxon>Pseudomonadaceae</taxon>
        <taxon>Pseudomonas</taxon>
    </lineage>
</organism>
<proteinExistence type="inferred from homology"/>
<gene>
    <name evidence="1" type="primary">rapA</name>
    <name type="ordered locus">PLES_17581</name>
</gene>
<comment type="function">
    <text evidence="1">Transcription regulator that activates transcription by stimulating RNA polymerase (RNAP) recycling in case of stress conditions such as supercoiled DNA or high salt concentrations. Probably acts by releasing the RNAP, when it is trapped or immobilized on tightly supercoiled DNA. Does not activate transcription on linear DNA. Probably not involved in DNA repair.</text>
</comment>
<comment type="subunit">
    <text evidence="1">Interacts with the RNAP. Has a higher affinity for the core RNAP than for the holoenzyme. Its ATPase activity is stimulated by binding to RNAP.</text>
</comment>
<comment type="similarity">
    <text evidence="1">Belongs to the SNF2/RAD54 helicase family. RapA subfamily.</text>
</comment>
<keyword id="KW-0010">Activator</keyword>
<keyword id="KW-0067">ATP-binding</keyword>
<keyword id="KW-0238">DNA-binding</keyword>
<keyword id="KW-0347">Helicase</keyword>
<keyword id="KW-0378">Hydrolase</keyword>
<keyword id="KW-0547">Nucleotide-binding</keyword>
<keyword id="KW-0804">Transcription</keyword>
<keyword id="KW-0805">Transcription regulation</keyword>
<sequence>MDMAQYQPGQRWISDSEAELGLGTILAQDGRLLTVLYPATGDTRQYALRNAPLTRVRFAPGDEVTHFEGWKMTVREVEESEGLLVYHGLTAQNEQCTLPETQLSNFIQFRLASDRLFAGQIDPLPWFSLRYHTLERRSQLLQSSLWGLGGARAQPIAHQLHIAREVADRMAPRVLLADEVGLGKTIEAGLIIHRQLLSGRAGRVLILVPENLQHQWLVEMRRRFNLQVALFDKERFAESDASNPFEDTQLALVALEWLKEDERAQDALFAAGWDLLVVDEAHHLVWHQDQVSAEYALVEQLAEIIPGVLLLTATPEQLGQDSHFARLRLLDPNRFHDLEAFRRESEQYRPVAEAVQELLDHGSLSAGARKAIHGFLGSEGDELLASVEGGDEEARSRLVRELLDRHGTGRVLFRNTRAAVQGFPQRELHAYPLPMPSQYEELPAGEHPDLYPEVNFQQQWEDGDDNNRWWRFDPRVEWLIDTLKMLKQFKVLVICAHAETALDLEDALRLRSGISATVFHEGMSILERDRAAAYFADEEFGAQVLICSEIGSEGRNFQFAHHLVLFDLPAHPDLLEQRIGRLDRIGQRHTIQLHVPHLENSAQQRLFQWYHQALNAFLNTCPTGNALQHEFGPRLLPLLDGGEDKAWDALLAEGRARREALEAELHSGRDRLLELNSGGAGEGEALVEAIEEQDDDFALPIYMERLFDAYGIHSEDHSENALILKPSEKMLDAGFPLGDDEGVTITYDRAQALAREDMQFLTWEHPMVQGGMDLVLSGSMGNTSVALIKNKALKPGTVLLELLFVSEAVAPRALQLGRWLPPQALRCLLDANGNDLAGRVSLETLNDQLESVPRVSANKFVQAQRDVLAKQFDVAEGKIVPRHEERVARAKQQFAAAMDEELARLTALKAVNPSVRDSELDSLRTQREEGLALLDKASLRLEAIRILVAG</sequence>
<name>RAPA_PSEA8</name>